<sequence>MKVTKADIVISAVKPEQYPDGDLPEIALAGRSNVGKSSFINKILNRKKLVRISSKPGKTQTLNFFLINEMMHFVDVPGYGYAKVSKTERAAWGKMIETYFTTREQLDAAVLVVDLRHKPTNDDVMMYDFLKHYDIPTIIIATKADKIPKGKWQKHLKVVKETLDIESGDEVVLFSSETGLGKEEAWKAIHKFTKTKNA</sequence>
<keyword id="KW-0131">Cell cycle</keyword>
<keyword id="KW-0132">Cell division</keyword>
<keyword id="KW-0342">GTP-binding</keyword>
<keyword id="KW-0460">Magnesium</keyword>
<keyword id="KW-0479">Metal-binding</keyword>
<keyword id="KW-0547">Nucleotide-binding</keyword>
<keyword id="KW-0717">Septation</keyword>
<dbReference type="EMBL" id="CP001407">
    <property type="protein sequence ID" value="ACO29432.1"/>
    <property type="molecule type" value="Genomic_DNA"/>
</dbReference>
<dbReference type="SMR" id="C1ETR5"/>
<dbReference type="KEGG" id="bcx:BCA_4581"/>
<dbReference type="PATRIC" id="fig|572264.18.peg.4529"/>
<dbReference type="Proteomes" id="UP000002210">
    <property type="component" value="Chromosome"/>
</dbReference>
<dbReference type="GO" id="GO:0005829">
    <property type="term" value="C:cytosol"/>
    <property type="evidence" value="ECO:0007669"/>
    <property type="project" value="TreeGrafter"/>
</dbReference>
<dbReference type="GO" id="GO:0005525">
    <property type="term" value="F:GTP binding"/>
    <property type="evidence" value="ECO:0007669"/>
    <property type="project" value="UniProtKB-UniRule"/>
</dbReference>
<dbReference type="GO" id="GO:0046872">
    <property type="term" value="F:metal ion binding"/>
    <property type="evidence" value="ECO:0007669"/>
    <property type="project" value="UniProtKB-KW"/>
</dbReference>
<dbReference type="GO" id="GO:0000917">
    <property type="term" value="P:division septum assembly"/>
    <property type="evidence" value="ECO:0007669"/>
    <property type="project" value="UniProtKB-KW"/>
</dbReference>
<dbReference type="CDD" id="cd01876">
    <property type="entry name" value="YihA_EngB"/>
    <property type="match status" value="1"/>
</dbReference>
<dbReference type="FunFam" id="3.40.50.300:FF:000098">
    <property type="entry name" value="Probable GTP-binding protein EngB"/>
    <property type="match status" value="1"/>
</dbReference>
<dbReference type="Gene3D" id="3.40.50.300">
    <property type="entry name" value="P-loop containing nucleotide triphosphate hydrolases"/>
    <property type="match status" value="1"/>
</dbReference>
<dbReference type="HAMAP" id="MF_00321">
    <property type="entry name" value="GTPase_EngB"/>
    <property type="match status" value="1"/>
</dbReference>
<dbReference type="InterPro" id="IPR030393">
    <property type="entry name" value="G_ENGB_dom"/>
</dbReference>
<dbReference type="InterPro" id="IPR006073">
    <property type="entry name" value="GTP-bd"/>
</dbReference>
<dbReference type="InterPro" id="IPR019987">
    <property type="entry name" value="GTP-bd_ribosome_bio_YsxC"/>
</dbReference>
<dbReference type="InterPro" id="IPR027417">
    <property type="entry name" value="P-loop_NTPase"/>
</dbReference>
<dbReference type="InterPro" id="IPR005225">
    <property type="entry name" value="Small_GTP-bd"/>
</dbReference>
<dbReference type="NCBIfam" id="TIGR03598">
    <property type="entry name" value="GTPase_YsxC"/>
    <property type="match status" value="1"/>
</dbReference>
<dbReference type="NCBIfam" id="TIGR00231">
    <property type="entry name" value="small_GTP"/>
    <property type="match status" value="1"/>
</dbReference>
<dbReference type="PANTHER" id="PTHR11649:SF13">
    <property type="entry name" value="ENGB-TYPE G DOMAIN-CONTAINING PROTEIN"/>
    <property type="match status" value="1"/>
</dbReference>
<dbReference type="PANTHER" id="PTHR11649">
    <property type="entry name" value="MSS1/TRME-RELATED GTP-BINDING PROTEIN"/>
    <property type="match status" value="1"/>
</dbReference>
<dbReference type="Pfam" id="PF01926">
    <property type="entry name" value="MMR_HSR1"/>
    <property type="match status" value="1"/>
</dbReference>
<dbReference type="SUPFAM" id="SSF52540">
    <property type="entry name" value="P-loop containing nucleoside triphosphate hydrolases"/>
    <property type="match status" value="1"/>
</dbReference>
<dbReference type="PROSITE" id="PS51706">
    <property type="entry name" value="G_ENGB"/>
    <property type="match status" value="1"/>
</dbReference>
<organism>
    <name type="scientific">Bacillus cereus (strain 03BB102)</name>
    <dbReference type="NCBI Taxonomy" id="572264"/>
    <lineage>
        <taxon>Bacteria</taxon>
        <taxon>Bacillati</taxon>
        <taxon>Bacillota</taxon>
        <taxon>Bacilli</taxon>
        <taxon>Bacillales</taxon>
        <taxon>Bacillaceae</taxon>
        <taxon>Bacillus</taxon>
        <taxon>Bacillus cereus group</taxon>
    </lineage>
</organism>
<protein>
    <recommendedName>
        <fullName evidence="1">Probable GTP-binding protein EngB</fullName>
    </recommendedName>
</protein>
<accession>C1ETR5</accession>
<proteinExistence type="inferred from homology"/>
<comment type="function">
    <text evidence="1">Necessary for normal cell division and for the maintenance of normal septation.</text>
</comment>
<comment type="cofactor">
    <cofactor evidence="1">
        <name>Mg(2+)</name>
        <dbReference type="ChEBI" id="CHEBI:18420"/>
    </cofactor>
</comment>
<comment type="similarity">
    <text evidence="1">Belongs to the TRAFAC class TrmE-Era-EngA-EngB-Septin-like GTPase superfamily. EngB GTPase family.</text>
</comment>
<name>ENGB_BACC3</name>
<evidence type="ECO:0000255" key="1">
    <source>
        <dbReference type="HAMAP-Rule" id="MF_00321"/>
    </source>
</evidence>
<feature type="chain" id="PRO_1000133045" description="Probable GTP-binding protein EngB">
    <location>
        <begin position="1"/>
        <end position="198"/>
    </location>
</feature>
<feature type="domain" description="EngB-type G" evidence="1">
    <location>
        <begin position="22"/>
        <end position="195"/>
    </location>
</feature>
<feature type="binding site" evidence="1">
    <location>
        <begin position="30"/>
        <end position="37"/>
    </location>
    <ligand>
        <name>GTP</name>
        <dbReference type="ChEBI" id="CHEBI:37565"/>
    </ligand>
</feature>
<feature type="binding site" evidence="1">
    <location>
        <position position="37"/>
    </location>
    <ligand>
        <name>Mg(2+)</name>
        <dbReference type="ChEBI" id="CHEBI:18420"/>
    </ligand>
</feature>
<feature type="binding site" evidence="1">
    <location>
        <begin position="57"/>
        <end position="61"/>
    </location>
    <ligand>
        <name>GTP</name>
        <dbReference type="ChEBI" id="CHEBI:37565"/>
    </ligand>
</feature>
<feature type="binding site" evidence="1">
    <location>
        <position position="59"/>
    </location>
    <ligand>
        <name>Mg(2+)</name>
        <dbReference type="ChEBI" id="CHEBI:18420"/>
    </ligand>
</feature>
<feature type="binding site" evidence="1">
    <location>
        <begin position="75"/>
        <end position="78"/>
    </location>
    <ligand>
        <name>GTP</name>
        <dbReference type="ChEBI" id="CHEBI:37565"/>
    </ligand>
</feature>
<feature type="binding site" evidence="1">
    <location>
        <begin position="142"/>
        <end position="145"/>
    </location>
    <ligand>
        <name>GTP</name>
        <dbReference type="ChEBI" id="CHEBI:37565"/>
    </ligand>
</feature>
<feature type="binding site" evidence="1">
    <location>
        <begin position="174"/>
        <end position="176"/>
    </location>
    <ligand>
        <name>GTP</name>
        <dbReference type="ChEBI" id="CHEBI:37565"/>
    </ligand>
</feature>
<gene>
    <name evidence="1" type="primary">engB</name>
    <name type="ordered locus">BCA_4581</name>
</gene>
<reference key="1">
    <citation type="submission" date="2009-02" db="EMBL/GenBank/DDBJ databases">
        <title>Genome sequence of Bacillus cereus 03BB102.</title>
        <authorList>
            <person name="Dodson R.J."/>
            <person name="Jackson P."/>
            <person name="Munk A.C."/>
            <person name="Brettin T."/>
            <person name="Bruce D."/>
            <person name="Detter C."/>
            <person name="Tapia R."/>
            <person name="Han C."/>
            <person name="Sutton G."/>
            <person name="Sims D."/>
        </authorList>
    </citation>
    <scope>NUCLEOTIDE SEQUENCE [LARGE SCALE GENOMIC DNA]</scope>
    <source>
        <strain>03BB102</strain>
    </source>
</reference>